<sequence length="539" mass="60989">MADEDGEGIHPSAPHRNGGGGGGSGLHCAGNGGGGGGGPRVVRIVKSESGYGFNVRGQVSEGGQLRSINGELYAPLQHVSAVLPGGAADRAGVRKGDRILEVNGVNVEGATHKQVVDLIRAGEKELILTVLSVPPHEADNLDPSDDSLGQSFYDYTEKQAVPISVPTYKHVEQNGEKFVVYNVYMAGRQLCSKRYREFAILHQNLKREFANFTFPRLPGKWPFSLSEQQLDARRRGLEEYLEKVCSIRVIGESDIMQEFLSESDENYNGVSDVELRVALPDGTTVTVRVKKNSTTDQVYQAIAAKVGMDSTTVNYFALFEVINHSFVRKLAPNEFPHKLYVQNYTSAVPGTCLTIRKWLFTTEEEVLLNDNDLAVTYFFHQAVDDVKKGYIKAEEKSYQLQKLHEQRKMVMYLNMLRTCEGYNEIIFPHCACDSRRKGHVITAISITHFKLHACTEEGQLENQVIAFEWDEMQRWDTDEEGMAFCFEYARGEKKPRWVKIFTPYFNYMHECFERVFCELKWRKENIFQMARSQQRDVAT</sequence>
<organism>
    <name type="scientific">Mus musculus</name>
    <name type="common">Mouse</name>
    <dbReference type="NCBI Taxonomy" id="10090"/>
    <lineage>
        <taxon>Eukaryota</taxon>
        <taxon>Metazoa</taxon>
        <taxon>Chordata</taxon>
        <taxon>Craniata</taxon>
        <taxon>Vertebrata</taxon>
        <taxon>Euteleostomi</taxon>
        <taxon>Mammalia</taxon>
        <taxon>Eutheria</taxon>
        <taxon>Euarchontoglires</taxon>
        <taxon>Glires</taxon>
        <taxon>Rodentia</taxon>
        <taxon>Myomorpha</taxon>
        <taxon>Muroidea</taxon>
        <taxon>Muridae</taxon>
        <taxon>Murinae</taxon>
        <taxon>Mus</taxon>
        <taxon>Mus</taxon>
    </lineage>
</organism>
<comment type="function">
    <text evidence="10">Involved in the retrograde transport from endosome to plasma membrane, a trafficking pathway that promotes the recycling of internalized transmembrane proteins. Following internalization, endocytosed transmembrane proteins are delivered to early endosomes and recycled to the plasma membrane instead of being degraded in lysosomes. SNX27 specifically binds and directs sorting of a subset of transmembrane proteins containing a PDZ-binding motif at the C-terminus: following interaction with target transmembrane proteins, associates with the retromer complex, preventing entry into the lysosomal pathway, and promotes retromer-tubule based plasma membrane recycling. SNX27 also binds with the WASH complex. Interacts with membranes containing phosphatidylinositol-3-phosphate (PtdIns(3P)). May participate in establishment of natural killer cell polarity. Recruits CYTIP to early endosomes.</text>
</comment>
<comment type="subunit">
    <text evidence="1 2 7 10">Core component of the SNX27-retromer, a multiprotein complex composed of SNX27, the WASH complex and the retromer complex. Interacts (via the FERM-like regions) with the WASH complex. Interacts with SNX1. Interacts with CYTIP. Interacts with DGKZ. Interacts with MCC (By similarity). Interacts (via PDZ domain) with a number of target transmembrane proteins (via PDZ-binding motif): ABCC4, ADRB2, ARHGEF7, GRIA1, GRIA2, GRIN1, GRIN2A GRIN2C, KCNJ6, KCNJ9 and SLC2A1/GLUT1. Interacts (via PDZ domains) with SLC9A3; directs SLC9A3 membrane insertion from early endosomes to the plasma membrane (By similarity).</text>
</comment>
<comment type="subcellular location">
    <subcellularLocation>
        <location evidence="1">Early endosome membrane</location>
        <topology evidence="1">Peripheral membrane protein</topology>
    </subcellularLocation>
    <subcellularLocation>
        <location evidence="1">Cytoplasm</location>
        <location evidence="1">Cytosol</location>
    </subcellularLocation>
    <text evidence="1">Localizes to immunological synapse in T-cells. In T-cells, recruited from the cytosol to sorting endosomes by phosphoinositide-3-kinase products (By similarity).</text>
</comment>
<comment type="alternative products">
    <event type="alternative splicing"/>
    <isoform>
        <id>Q3UHD6-1</id>
        <name>1</name>
        <name>SNX27a</name>
        <sequence type="displayed"/>
    </isoform>
    <isoform>
        <id>Q3UHD6-2</id>
        <name>2</name>
        <name>SNX27b</name>
        <sequence type="described" ref="VSP_030540"/>
    </isoform>
</comment>
<comment type="tissue specificity">
    <text evidence="8">Expressed in cells of hematopoietic origin.</text>
</comment>
<comment type="domain">
    <text evidence="1">The PDZ domain mediates binding to a subset of proteins containing a PDZ-binding motif at the C-terminus: the specificity for PDZ-binding motif is provided by the 2 residues located upstream of the canonical PDZ-binding motif. The PDZ domain also mediates binding to the retromer complex via direct interaction with VPS26 (VPS26A or VPS26B).</text>
</comment>
<comment type="domain">
    <text evidence="1">The PX domain mediates binding to phosphatidylinositol 3-phosphate (PtdIns(3P)) and localization to early endosome membranes.</text>
</comment>
<comment type="disruption phenotype">
    <text evidence="9 10">Growth retardation followed by lethality. Some mice die in the uterus during embryonic development. Newborn mice that survive fail to thrive and all die at different times within the first 3 weeks. The body weight of newborn is lower than wild-type mice, and the postnatal growth is severely retarded, with a clear retardation of body weight gain. The growth retardation is not only reflected in the body weight, but also in multiple organs, such as the spleen, kidney, liver, heart and intestine. Mice also show neuronal deficits in the hippocampus and cortex: despite a normal neuroanatomy, defects in synaptic function, learning and memory and a reduction in the amounts of ionotropic glutamate receptors (NMDA and AMPA receptors) are observed.</text>
</comment>
<comment type="sequence caution" evidence="13">
    <conflict type="erroneous initiation">
        <sequence resource="EMBL-CDS" id="BAB30966"/>
    </conflict>
    <text>Truncated N-terminus.</text>
</comment>
<comment type="sequence caution" evidence="13">
    <conflict type="erroneous termination">
        <sequence resource="EMBL-CDS" id="BAB30966"/>
    </conflict>
    <text>Truncated C-terminus.</text>
</comment>
<evidence type="ECO:0000250" key="1"/>
<evidence type="ECO:0000250" key="2">
    <source>
        <dbReference type="UniProtKB" id="Q96L92"/>
    </source>
</evidence>
<evidence type="ECO:0000255" key="3">
    <source>
        <dbReference type="PROSITE-ProRule" id="PRU00143"/>
    </source>
</evidence>
<evidence type="ECO:0000255" key="4">
    <source>
        <dbReference type="PROSITE-ProRule" id="PRU00147"/>
    </source>
</evidence>
<evidence type="ECO:0000255" key="5">
    <source>
        <dbReference type="PROSITE-ProRule" id="PRU00166"/>
    </source>
</evidence>
<evidence type="ECO:0000256" key="6">
    <source>
        <dbReference type="SAM" id="MobiDB-lite"/>
    </source>
</evidence>
<evidence type="ECO:0000269" key="7">
    <source>
    </source>
</evidence>
<evidence type="ECO:0000269" key="8">
    <source>
    </source>
</evidence>
<evidence type="ECO:0000269" key="9">
    <source>
    </source>
</evidence>
<evidence type="ECO:0000269" key="10">
    <source>
    </source>
</evidence>
<evidence type="ECO:0000303" key="11">
    <source>
    </source>
</evidence>
<evidence type="ECO:0000303" key="12">
    <source>
    </source>
</evidence>
<evidence type="ECO:0000305" key="13"/>
<evidence type="ECO:0007744" key="14">
    <source>
    </source>
</evidence>
<proteinExistence type="evidence at protein level"/>
<protein>
    <recommendedName>
        <fullName>Sorting nexin-27</fullName>
    </recommendedName>
</protein>
<feature type="chain" id="PRO_0000315357" description="Sorting nexin-27">
    <location>
        <begin position="1"/>
        <end position="539"/>
    </location>
</feature>
<feature type="domain" description="PDZ" evidence="3">
    <location>
        <begin position="41"/>
        <end position="134"/>
    </location>
</feature>
<feature type="domain" description="PX" evidence="4">
    <location>
        <begin position="159"/>
        <end position="267"/>
    </location>
</feature>
<feature type="domain" description="Ras-associating" evidence="5">
    <location>
        <begin position="271"/>
        <end position="360"/>
    </location>
</feature>
<feature type="region of interest" description="Disordered" evidence="6">
    <location>
        <begin position="1"/>
        <end position="40"/>
    </location>
</feature>
<feature type="region of interest" description="FERM-like region F1" evidence="1">
    <location>
        <begin position="271"/>
        <end position="360"/>
    </location>
</feature>
<feature type="region of interest" description="FERM-like region F2" evidence="1">
    <location>
        <begin position="371"/>
        <end position="419"/>
    </location>
</feature>
<feature type="region of interest" description="FERM-like region F3" evidence="1">
    <location>
        <begin position="423"/>
        <end position="523"/>
    </location>
</feature>
<feature type="compositionally biased region" description="Gly residues" evidence="6">
    <location>
        <begin position="17"/>
        <end position="39"/>
    </location>
</feature>
<feature type="modified residue" description="Phosphoserine" evidence="14">
    <location>
        <position position="49"/>
    </location>
</feature>
<feature type="modified residue" description="Phosphoserine" evidence="2">
    <location>
        <position position="60"/>
    </location>
</feature>
<feature type="splice variant" id="VSP_030540" description="In isoform 2." evidence="11 12">
    <original>NIFQMARSQQRDVAT</original>
    <variation>EY</variation>
    <location>
        <begin position="525"/>
        <end position="539"/>
    </location>
</feature>
<name>SNX27_MOUSE</name>
<accession>Q3UHD6</accession>
<accession>Q7TQL6</accession>
<accession>Q80TZ1</accession>
<accession>Q9CYB5</accession>
<keyword id="KW-0025">Alternative splicing</keyword>
<keyword id="KW-0963">Cytoplasm</keyword>
<keyword id="KW-0967">Endosome</keyword>
<keyword id="KW-0446">Lipid-binding</keyword>
<keyword id="KW-0472">Membrane</keyword>
<keyword id="KW-0597">Phosphoprotein</keyword>
<keyword id="KW-0653">Protein transport</keyword>
<keyword id="KW-1185">Reference proteome</keyword>
<keyword id="KW-0813">Transport</keyword>
<gene>
    <name type="primary">Snx27</name>
    <name type="synonym">Kiaa0488</name>
</gene>
<reference key="1">
    <citation type="journal article" date="2005" name="Science">
        <title>The transcriptional landscape of the mammalian genome.</title>
        <authorList>
            <person name="Carninci P."/>
            <person name="Kasukawa T."/>
            <person name="Katayama S."/>
            <person name="Gough J."/>
            <person name="Frith M.C."/>
            <person name="Maeda N."/>
            <person name="Oyama R."/>
            <person name="Ravasi T."/>
            <person name="Lenhard B."/>
            <person name="Wells C."/>
            <person name="Kodzius R."/>
            <person name="Shimokawa K."/>
            <person name="Bajic V.B."/>
            <person name="Brenner S.E."/>
            <person name="Batalov S."/>
            <person name="Forrest A.R."/>
            <person name="Zavolan M."/>
            <person name="Davis M.J."/>
            <person name="Wilming L.G."/>
            <person name="Aidinis V."/>
            <person name="Allen J.E."/>
            <person name="Ambesi-Impiombato A."/>
            <person name="Apweiler R."/>
            <person name="Aturaliya R.N."/>
            <person name="Bailey T.L."/>
            <person name="Bansal M."/>
            <person name="Baxter L."/>
            <person name="Beisel K.W."/>
            <person name="Bersano T."/>
            <person name="Bono H."/>
            <person name="Chalk A.M."/>
            <person name="Chiu K.P."/>
            <person name="Choudhary V."/>
            <person name="Christoffels A."/>
            <person name="Clutterbuck D.R."/>
            <person name="Crowe M.L."/>
            <person name="Dalla E."/>
            <person name="Dalrymple B.P."/>
            <person name="de Bono B."/>
            <person name="Della Gatta G."/>
            <person name="di Bernardo D."/>
            <person name="Down T."/>
            <person name="Engstrom P."/>
            <person name="Fagiolini M."/>
            <person name="Faulkner G."/>
            <person name="Fletcher C.F."/>
            <person name="Fukushima T."/>
            <person name="Furuno M."/>
            <person name="Futaki S."/>
            <person name="Gariboldi M."/>
            <person name="Georgii-Hemming P."/>
            <person name="Gingeras T.R."/>
            <person name="Gojobori T."/>
            <person name="Green R.E."/>
            <person name="Gustincich S."/>
            <person name="Harbers M."/>
            <person name="Hayashi Y."/>
            <person name="Hensch T.K."/>
            <person name="Hirokawa N."/>
            <person name="Hill D."/>
            <person name="Huminiecki L."/>
            <person name="Iacono M."/>
            <person name="Ikeo K."/>
            <person name="Iwama A."/>
            <person name="Ishikawa T."/>
            <person name="Jakt M."/>
            <person name="Kanapin A."/>
            <person name="Katoh M."/>
            <person name="Kawasawa Y."/>
            <person name="Kelso J."/>
            <person name="Kitamura H."/>
            <person name="Kitano H."/>
            <person name="Kollias G."/>
            <person name="Krishnan S.P."/>
            <person name="Kruger A."/>
            <person name="Kummerfeld S.K."/>
            <person name="Kurochkin I.V."/>
            <person name="Lareau L.F."/>
            <person name="Lazarevic D."/>
            <person name="Lipovich L."/>
            <person name="Liu J."/>
            <person name="Liuni S."/>
            <person name="McWilliam S."/>
            <person name="Madan Babu M."/>
            <person name="Madera M."/>
            <person name="Marchionni L."/>
            <person name="Matsuda H."/>
            <person name="Matsuzawa S."/>
            <person name="Miki H."/>
            <person name="Mignone F."/>
            <person name="Miyake S."/>
            <person name="Morris K."/>
            <person name="Mottagui-Tabar S."/>
            <person name="Mulder N."/>
            <person name="Nakano N."/>
            <person name="Nakauchi H."/>
            <person name="Ng P."/>
            <person name="Nilsson R."/>
            <person name="Nishiguchi S."/>
            <person name="Nishikawa S."/>
            <person name="Nori F."/>
            <person name="Ohara O."/>
            <person name="Okazaki Y."/>
            <person name="Orlando V."/>
            <person name="Pang K.C."/>
            <person name="Pavan W.J."/>
            <person name="Pavesi G."/>
            <person name="Pesole G."/>
            <person name="Petrovsky N."/>
            <person name="Piazza S."/>
            <person name="Reed J."/>
            <person name="Reid J.F."/>
            <person name="Ring B.Z."/>
            <person name="Ringwald M."/>
            <person name="Rost B."/>
            <person name="Ruan Y."/>
            <person name="Salzberg S.L."/>
            <person name="Sandelin A."/>
            <person name="Schneider C."/>
            <person name="Schoenbach C."/>
            <person name="Sekiguchi K."/>
            <person name="Semple C.A."/>
            <person name="Seno S."/>
            <person name="Sessa L."/>
            <person name="Sheng Y."/>
            <person name="Shibata Y."/>
            <person name="Shimada H."/>
            <person name="Shimada K."/>
            <person name="Silva D."/>
            <person name="Sinclair B."/>
            <person name="Sperling S."/>
            <person name="Stupka E."/>
            <person name="Sugiura K."/>
            <person name="Sultana R."/>
            <person name="Takenaka Y."/>
            <person name="Taki K."/>
            <person name="Tammoja K."/>
            <person name="Tan S.L."/>
            <person name="Tang S."/>
            <person name="Taylor M.S."/>
            <person name="Tegner J."/>
            <person name="Teichmann S.A."/>
            <person name="Ueda H.R."/>
            <person name="van Nimwegen E."/>
            <person name="Verardo R."/>
            <person name="Wei C.L."/>
            <person name="Yagi K."/>
            <person name="Yamanishi H."/>
            <person name="Zabarovsky E."/>
            <person name="Zhu S."/>
            <person name="Zimmer A."/>
            <person name="Hide W."/>
            <person name="Bult C."/>
            <person name="Grimmond S.M."/>
            <person name="Teasdale R.D."/>
            <person name="Liu E.T."/>
            <person name="Brusic V."/>
            <person name="Quackenbush J."/>
            <person name="Wahlestedt C."/>
            <person name="Mattick J.S."/>
            <person name="Hume D.A."/>
            <person name="Kai C."/>
            <person name="Sasaki D."/>
            <person name="Tomaru Y."/>
            <person name="Fukuda S."/>
            <person name="Kanamori-Katayama M."/>
            <person name="Suzuki M."/>
            <person name="Aoki J."/>
            <person name="Arakawa T."/>
            <person name="Iida J."/>
            <person name="Imamura K."/>
            <person name="Itoh M."/>
            <person name="Kato T."/>
            <person name="Kawaji H."/>
            <person name="Kawagashira N."/>
            <person name="Kawashima T."/>
            <person name="Kojima M."/>
            <person name="Kondo S."/>
            <person name="Konno H."/>
            <person name="Nakano K."/>
            <person name="Ninomiya N."/>
            <person name="Nishio T."/>
            <person name="Okada M."/>
            <person name="Plessy C."/>
            <person name="Shibata K."/>
            <person name="Shiraki T."/>
            <person name="Suzuki S."/>
            <person name="Tagami M."/>
            <person name="Waki K."/>
            <person name="Watahiki A."/>
            <person name="Okamura-Oho Y."/>
            <person name="Suzuki H."/>
            <person name="Kawai J."/>
            <person name="Hayashizaki Y."/>
        </authorList>
    </citation>
    <scope>NUCLEOTIDE SEQUENCE [LARGE SCALE MRNA] (ISOFORM 2)</scope>
    <source>
        <strain>C57BL/6J</strain>
        <tissue>Embryo</tissue>
    </source>
</reference>
<reference key="2">
    <citation type="journal article" date="2003" name="DNA Res.">
        <title>Prediction of the coding sequences of mouse homologues of KIAA gene: III. The complete nucleotide sequences of 500 mouse KIAA-homologous cDNAs identified by screening of terminal sequences of cDNA clones randomly sampled from size-fractionated libraries.</title>
        <authorList>
            <person name="Okazaki N."/>
            <person name="Kikuno R."/>
            <person name="Ohara R."/>
            <person name="Inamoto S."/>
            <person name="Koseki H."/>
            <person name="Hiraoka S."/>
            <person name="Saga Y."/>
            <person name="Nagase T."/>
            <person name="Ohara O."/>
            <person name="Koga H."/>
        </authorList>
    </citation>
    <scope>NUCLEOTIDE SEQUENCE [LARGE SCALE MRNA] OF 8-526 (ISOFORM 2)</scope>
</reference>
<reference key="3">
    <citation type="journal article" date="2004" name="Genome Res.">
        <title>The status, quality, and expansion of the NIH full-length cDNA project: the Mammalian Gene Collection (MGC).</title>
        <authorList>
            <consortium name="The MGC Project Team"/>
        </authorList>
    </citation>
    <scope>NUCLEOTIDE SEQUENCE [LARGE SCALE MRNA] OF 8-526 (ISOFORM 1)</scope>
    <source>
        <tissue>Pancreas</tissue>
    </source>
</reference>
<reference key="4">
    <citation type="journal article" date="2007" name="Mol. Cell. Proteomics">
        <title>Proteomics identification of sorting nexin 27 as a diacylglycerol kinase zeta-associated protein: new diacylglycerol kinase roles in endocytic recycling.</title>
        <authorList>
            <person name="Rincon E."/>
            <person name="Santos T."/>
            <person name="Avila-Flores A."/>
            <person name="Albar J.P."/>
            <person name="Lalioti V."/>
            <person name="Lei C."/>
            <person name="Hong W."/>
            <person name="Merida I."/>
        </authorList>
    </citation>
    <scope>TISSUE SPECIFICITY</scope>
</reference>
<reference key="5">
    <citation type="journal article" date="2004" name="J. Cell Sci.">
        <title>New sorting nexin (SNX27) and NHERF specifically interact with the 5-HT4a receptor splice variant: roles in receptor targeting.</title>
        <authorList>
            <person name="Joubert L."/>
            <person name="Hanson B."/>
            <person name="Barthet G."/>
            <person name="Sebben M."/>
            <person name="Claeysen S."/>
            <person name="Hong W."/>
            <person name="Marin P."/>
            <person name="Dumuis A."/>
            <person name="Bockaert J."/>
        </authorList>
    </citation>
    <scope>INTERACTION WITH HT4R</scope>
</reference>
<reference key="6">
    <citation type="journal article" date="2010" name="Cell">
        <title>A tissue-specific atlas of mouse protein phosphorylation and expression.</title>
        <authorList>
            <person name="Huttlin E.L."/>
            <person name="Jedrychowski M.P."/>
            <person name="Elias J.E."/>
            <person name="Goswami T."/>
            <person name="Rad R."/>
            <person name="Beausoleil S.A."/>
            <person name="Villen J."/>
            <person name="Haas W."/>
            <person name="Sowa M.E."/>
            <person name="Gygi S.P."/>
        </authorList>
    </citation>
    <scope>PHOSPHORYLATION [LARGE SCALE ANALYSIS] AT SER-49</scope>
    <scope>IDENTIFICATION BY MASS SPECTROMETRY [LARGE SCALE ANALYSIS]</scope>
    <source>
        <tissue>Brain</tissue>
        <tissue>Brown adipose tissue</tissue>
        <tissue>Kidney</tissue>
        <tissue>Liver</tissue>
        <tissue>Lung</tissue>
        <tissue>Pancreas</tissue>
        <tissue>Spleen</tissue>
        <tissue>Testis</tissue>
    </source>
</reference>
<reference key="7">
    <citation type="journal article" date="2011" name="Mol. Cell. Biol.">
        <title>Deficiency of sorting nexin 27 (SNX27) leads to growth retardation and elevated levels of N-methyl-D-aspartate receptor 2C (NR2C).</title>
        <authorList>
            <person name="Cai L."/>
            <person name="Loo L.S."/>
            <person name="Atlashkin V."/>
            <person name="Hanson B.J."/>
            <person name="Hong W."/>
        </authorList>
    </citation>
    <scope>DISRUPTION PHENOTYPE</scope>
</reference>
<reference key="8">
    <citation type="journal article" date="2013" name="Nat. Med.">
        <title>Loss of sorting nexin 27 contributes to excitatory synaptic dysfunction by modulating glutamate receptor recycling in Down's syndrome.</title>
        <authorList>
            <person name="Wang X."/>
            <person name="Zhao Y."/>
            <person name="Zhang X."/>
            <person name="Badie H."/>
            <person name="Zhou Y."/>
            <person name="Mu Y."/>
            <person name="Loo L.S."/>
            <person name="Cai L."/>
            <person name="Thompson R.C."/>
            <person name="Yang B."/>
            <person name="Chen Y."/>
            <person name="Johnson P.F."/>
            <person name="Wu C."/>
            <person name="Bu G."/>
            <person name="Mobley W.C."/>
            <person name="Zhang D."/>
            <person name="Gage F.H."/>
            <person name="Ranscht B."/>
            <person name="Zhang Y.W."/>
            <person name="Lipton S.A."/>
            <person name="Hong W."/>
            <person name="Xu H."/>
        </authorList>
    </citation>
    <scope>FUNCTION</scope>
    <scope>DISRUPTION PHENOTYPE</scope>
    <scope>INTERACTION WITH GRIA1; GRIA2; GRIN1 AND GRIN2A</scope>
</reference>
<dbReference type="EMBL" id="AK017836">
    <property type="protein sequence ID" value="BAB30966.1"/>
    <property type="status" value="ALT_SEQ"/>
    <property type="molecule type" value="mRNA"/>
</dbReference>
<dbReference type="EMBL" id="AK147452">
    <property type="protein sequence ID" value="BAE27921.1"/>
    <property type="molecule type" value="mRNA"/>
</dbReference>
<dbReference type="EMBL" id="AK122296">
    <property type="protein sequence ID" value="BAC65578.1"/>
    <property type="molecule type" value="mRNA"/>
</dbReference>
<dbReference type="EMBL" id="BC053495">
    <property type="protein sequence ID" value="AAH53495.1"/>
    <property type="molecule type" value="mRNA"/>
</dbReference>
<dbReference type="CCDS" id="CCDS38537.1">
    <molecule id="Q3UHD6-1"/>
</dbReference>
<dbReference type="CCDS" id="CCDS38538.1">
    <molecule id="Q3UHD6-2"/>
</dbReference>
<dbReference type="RefSeq" id="NP_001075953.1">
    <molecule id="Q3UHD6-1"/>
    <property type="nucleotide sequence ID" value="NM_001082484.2"/>
</dbReference>
<dbReference type="RefSeq" id="NP_083997.1">
    <molecule id="Q3UHD6-2"/>
    <property type="nucleotide sequence ID" value="NM_029721.2"/>
</dbReference>
<dbReference type="SMR" id="Q3UHD6"/>
<dbReference type="BioGRID" id="218291">
    <property type="interactions" value="26"/>
</dbReference>
<dbReference type="DIP" id="DIP-60337N"/>
<dbReference type="ELM" id="Q3UHD6"/>
<dbReference type="FunCoup" id="Q3UHD6">
    <property type="interactions" value="3608"/>
</dbReference>
<dbReference type="IntAct" id="Q3UHD6">
    <property type="interactions" value="7"/>
</dbReference>
<dbReference type="MINT" id="Q3UHD6"/>
<dbReference type="STRING" id="10090.ENSMUSP00000102904"/>
<dbReference type="GlyGen" id="Q3UHD6">
    <property type="glycosylation" value="2 sites, 1 N-linked glycan (1 site), 1 O-linked glycan (1 site)"/>
</dbReference>
<dbReference type="iPTMnet" id="Q3UHD6"/>
<dbReference type="PhosphoSitePlus" id="Q3UHD6"/>
<dbReference type="SwissPalm" id="Q3UHD6"/>
<dbReference type="PaxDb" id="10090-ENSMUSP00000102904"/>
<dbReference type="PeptideAtlas" id="Q3UHD6"/>
<dbReference type="ProteomicsDB" id="261470">
    <molecule id="Q3UHD6-1"/>
</dbReference>
<dbReference type="ProteomicsDB" id="261471">
    <molecule id="Q3UHD6-2"/>
</dbReference>
<dbReference type="Pumba" id="Q3UHD6"/>
<dbReference type="Antibodypedia" id="46991">
    <property type="antibodies" value="282 antibodies from 25 providers"/>
</dbReference>
<dbReference type="Ensembl" id="ENSMUST00000029783.16">
    <molecule id="Q3UHD6-2"/>
    <property type="protein sequence ID" value="ENSMUSP00000029783.10"/>
    <property type="gene ID" value="ENSMUSG00000028136.16"/>
</dbReference>
<dbReference type="Ensembl" id="ENSMUST00000107283.8">
    <molecule id="Q3UHD6-1"/>
    <property type="protein sequence ID" value="ENSMUSP00000102904.2"/>
    <property type="gene ID" value="ENSMUSG00000028136.16"/>
</dbReference>
<dbReference type="GeneID" id="76742"/>
<dbReference type="KEGG" id="mmu:76742"/>
<dbReference type="UCSC" id="uc008qgr.2">
    <molecule id="Q3UHD6-2"/>
    <property type="organism name" value="mouse"/>
</dbReference>
<dbReference type="UCSC" id="uc008qgs.2">
    <molecule id="Q3UHD6-1"/>
    <property type="organism name" value="mouse"/>
</dbReference>
<dbReference type="AGR" id="MGI:1923992"/>
<dbReference type="CTD" id="81609"/>
<dbReference type="MGI" id="MGI:1923992">
    <property type="gene designation" value="Snx27"/>
</dbReference>
<dbReference type="VEuPathDB" id="HostDB:ENSMUSG00000028136"/>
<dbReference type="eggNOG" id="KOG3784">
    <property type="taxonomic scope" value="Eukaryota"/>
</dbReference>
<dbReference type="GeneTree" id="ENSGT00950000183212"/>
<dbReference type="HOGENOM" id="CLU_028138_0_0_1"/>
<dbReference type="InParanoid" id="Q3UHD6"/>
<dbReference type="OMA" id="PNEFPHN"/>
<dbReference type="OrthoDB" id="10036828at2759"/>
<dbReference type="PhylomeDB" id="Q3UHD6"/>
<dbReference type="TreeFam" id="TF318398"/>
<dbReference type="BioGRID-ORCS" id="76742">
    <property type="hits" value="1 hit in 79 CRISPR screens"/>
</dbReference>
<dbReference type="CD-CODE" id="CE726F99">
    <property type="entry name" value="Postsynaptic density"/>
</dbReference>
<dbReference type="ChiTaRS" id="Snx27">
    <property type="organism name" value="mouse"/>
</dbReference>
<dbReference type="PRO" id="PR:Q3UHD6"/>
<dbReference type="Proteomes" id="UP000000589">
    <property type="component" value="Chromosome 3"/>
</dbReference>
<dbReference type="RNAct" id="Q3UHD6">
    <property type="molecule type" value="protein"/>
</dbReference>
<dbReference type="Bgee" id="ENSMUSG00000028136">
    <property type="expression patterns" value="Expressed in ear vesicle and 228 other cell types or tissues"/>
</dbReference>
<dbReference type="ExpressionAtlas" id="Q3UHD6">
    <property type="expression patterns" value="baseline and differential"/>
</dbReference>
<dbReference type="GO" id="GO:0005829">
    <property type="term" value="C:cytosol"/>
    <property type="evidence" value="ECO:0007669"/>
    <property type="project" value="UniProtKB-SubCell"/>
</dbReference>
<dbReference type="GO" id="GO:0005769">
    <property type="term" value="C:early endosome"/>
    <property type="evidence" value="ECO:0000266"/>
    <property type="project" value="MGI"/>
</dbReference>
<dbReference type="GO" id="GO:0031901">
    <property type="term" value="C:early endosome membrane"/>
    <property type="evidence" value="ECO:0007669"/>
    <property type="project" value="UniProtKB-SubCell"/>
</dbReference>
<dbReference type="GO" id="GO:0005768">
    <property type="term" value="C:endosome"/>
    <property type="evidence" value="ECO:0000314"/>
    <property type="project" value="MGI"/>
</dbReference>
<dbReference type="GO" id="GO:0098978">
    <property type="term" value="C:glutamatergic synapse"/>
    <property type="evidence" value="ECO:0000314"/>
    <property type="project" value="SynGO"/>
</dbReference>
<dbReference type="GO" id="GO:0001772">
    <property type="term" value="C:immunological synapse"/>
    <property type="evidence" value="ECO:0000250"/>
    <property type="project" value="UniProtKB"/>
</dbReference>
<dbReference type="GO" id="GO:0098794">
    <property type="term" value="C:postsynapse"/>
    <property type="evidence" value="ECO:0000314"/>
    <property type="project" value="SynGO"/>
</dbReference>
<dbReference type="GO" id="GO:0098842">
    <property type="term" value="C:postsynaptic early endosome"/>
    <property type="evidence" value="ECO:0000314"/>
    <property type="project" value="SynGO"/>
</dbReference>
<dbReference type="GO" id="GO:0098837">
    <property type="term" value="C:postsynaptic recycling endosome"/>
    <property type="evidence" value="ECO:0000314"/>
    <property type="project" value="SynGO"/>
</dbReference>
<dbReference type="GO" id="GO:0030904">
    <property type="term" value="C:retromer complex"/>
    <property type="evidence" value="ECO:0007669"/>
    <property type="project" value="Ensembl"/>
</dbReference>
<dbReference type="GO" id="GO:0098685">
    <property type="term" value="C:Schaffer collateral - CA1 synapse"/>
    <property type="evidence" value="ECO:0000314"/>
    <property type="project" value="SynGO"/>
</dbReference>
<dbReference type="GO" id="GO:0071203">
    <property type="term" value="C:WASH complex"/>
    <property type="evidence" value="ECO:0007669"/>
    <property type="project" value="Ensembl"/>
</dbReference>
<dbReference type="GO" id="GO:0032266">
    <property type="term" value="F:phosphatidylinositol-3-phosphate binding"/>
    <property type="evidence" value="ECO:0000250"/>
    <property type="project" value="UniProtKB"/>
</dbReference>
<dbReference type="GO" id="GO:0032456">
    <property type="term" value="P:endocytic recycling"/>
    <property type="evidence" value="ECO:0000250"/>
    <property type="project" value="UniProtKB"/>
</dbReference>
<dbReference type="GO" id="GO:0016197">
    <property type="term" value="P:endosomal transport"/>
    <property type="evidence" value="ECO:0000315"/>
    <property type="project" value="MGI"/>
</dbReference>
<dbReference type="GO" id="GO:0008333">
    <property type="term" value="P:endosome to lysosome transport"/>
    <property type="evidence" value="ECO:0000266"/>
    <property type="project" value="MGI"/>
</dbReference>
<dbReference type="GO" id="GO:0006886">
    <property type="term" value="P:intracellular protein transport"/>
    <property type="evidence" value="ECO:0000250"/>
    <property type="project" value="UniProtKB"/>
</dbReference>
<dbReference type="GO" id="GO:0099072">
    <property type="term" value="P:regulation of postsynaptic membrane neurotransmitter receptor levels"/>
    <property type="evidence" value="ECO:0000314"/>
    <property type="project" value="SynGO"/>
</dbReference>
<dbReference type="GO" id="GO:0090128">
    <property type="term" value="P:regulation of synapse maturation"/>
    <property type="evidence" value="ECO:0007669"/>
    <property type="project" value="Ensembl"/>
</dbReference>
<dbReference type="GO" id="GO:0007165">
    <property type="term" value="P:signal transduction"/>
    <property type="evidence" value="ECO:0007669"/>
    <property type="project" value="InterPro"/>
</dbReference>
<dbReference type="CDD" id="cd13338">
    <property type="entry name" value="FERM-like_C_SNX27"/>
    <property type="match status" value="1"/>
</dbReference>
<dbReference type="CDD" id="cd01777">
    <property type="entry name" value="FERM_F1_SNX27"/>
    <property type="match status" value="1"/>
</dbReference>
<dbReference type="CDD" id="cd23070">
    <property type="entry name" value="PDZ_SNX27-like"/>
    <property type="match status" value="1"/>
</dbReference>
<dbReference type="CDD" id="cd06886">
    <property type="entry name" value="PX_SNX27"/>
    <property type="match status" value="1"/>
</dbReference>
<dbReference type="FunFam" id="1.20.80.60:FF:000002">
    <property type="entry name" value="sorting nexin-27 isoform X2"/>
    <property type="match status" value="1"/>
</dbReference>
<dbReference type="FunFam" id="2.30.42.10:FF:000061">
    <property type="entry name" value="sorting nexin-27 isoform X2"/>
    <property type="match status" value="1"/>
</dbReference>
<dbReference type="FunFam" id="3.10.20.90:FF:000075">
    <property type="entry name" value="sorting nexin-27 isoform X2"/>
    <property type="match status" value="1"/>
</dbReference>
<dbReference type="FunFam" id="3.30.1520.10:FF:000003">
    <property type="entry name" value="sorting nexin-27 isoform X2"/>
    <property type="match status" value="1"/>
</dbReference>
<dbReference type="Gene3D" id="1.20.80.60">
    <property type="match status" value="1"/>
</dbReference>
<dbReference type="Gene3D" id="2.30.42.10">
    <property type="match status" value="1"/>
</dbReference>
<dbReference type="Gene3D" id="3.10.20.90">
    <property type="entry name" value="Phosphatidylinositol 3-kinase Catalytic Subunit, Chain A, domain 1"/>
    <property type="match status" value="1"/>
</dbReference>
<dbReference type="Gene3D" id="3.30.1520.10">
    <property type="entry name" value="Phox-like domain"/>
    <property type="match status" value="1"/>
</dbReference>
<dbReference type="InterPro" id="IPR001478">
    <property type="entry name" value="PDZ"/>
</dbReference>
<dbReference type="InterPro" id="IPR036034">
    <property type="entry name" value="PDZ_sf"/>
</dbReference>
<dbReference type="InterPro" id="IPR001683">
    <property type="entry name" value="PX_dom"/>
</dbReference>
<dbReference type="InterPro" id="IPR036871">
    <property type="entry name" value="PX_dom_sf"/>
</dbReference>
<dbReference type="InterPro" id="IPR000159">
    <property type="entry name" value="RA_dom"/>
</dbReference>
<dbReference type="InterPro" id="IPR037827">
    <property type="entry name" value="SNX27_FERM-like_dom"/>
</dbReference>
<dbReference type="InterPro" id="IPR037833">
    <property type="entry name" value="SNX27_PX"/>
</dbReference>
<dbReference type="InterPro" id="IPR037835">
    <property type="entry name" value="SNX27_RA"/>
</dbReference>
<dbReference type="InterPro" id="IPR029071">
    <property type="entry name" value="Ubiquitin-like_domsf"/>
</dbReference>
<dbReference type="PANTHER" id="PTHR12431">
    <property type="entry name" value="SORTING NEXIN 17 AND 27"/>
    <property type="match status" value="1"/>
</dbReference>
<dbReference type="PANTHER" id="PTHR12431:SF19">
    <property type="entry name" value="SORTING NEXIN-27"/>
    <property type="match status" value="1"/>
</dbReference>
<dbReference type="Pfam" id="PF00595">
    <property type="entry name" value="PDZ"/>
    <property type="match status" value="1"/>
</dbReference>
<dbReference type="Pfam" id="PF00787">
    <property type="entry name" value="PX"/>
    <property type="match status" value="1"/>
</dbReference>
<dbReference type="Pfam" id="PF00788">
    <property type="entry name" value="RA"/>
    <property type="match status" value="1"/>
</dbReference>
<dbReference type="SMART" id="SM00228">
    <property type="entry name" value="PDZ"/>
    <property type="match status" value="1"/>
</dbReference>
<dbReference type="SMART" id="SM00312">
    <property type="entry name" value="PX"/>
    <property type="match status" value="1"/>
</dbReference>
<dbReference type="SUPFAM" id="SSF50156">
    <property type="entry name" value="PDZ domain-like"/>
    <property type="match status" value="1"/>
</dbReference>
<dbReference type="SUPFAM" id="SSF64268">
    <property type="entry name" value="PX domain"/>
    <property type="match status" value="1"/>
</dbReference>
<dbReference type="SUPFAM" id="SSF54236">
    <property type="entry name" value="Ubiquitin-like"/>
    <property type="match status" value="1"/>
</dbReference>
<dbReference type="PROSITE" id="PS50106">
    <property type="entry name" value="PDZ"/>
    <property type="match status" value="1"/>
</dbReference>
<dbReference type="PROSITE" id="PS50195">
    <property type="entry name" value="PX"/>
    <property type="match status" value="1"/>
</dbReference>
<dbReference type="PROSITE" id="PS50200">
    <property type="entry name" value="RA"/>
    <property type="match status" value="1"/>
</dbReference>